<comment type="catalytic activity">
    <reaction evidence="1">
        <text>uridine + ATP = UMP + ADP + H(+)</text>
        <dbReference type="Rhea" id="RHEA:16825"/>
        <dbReference type="ChEBI" id="CHEBI:15378"/>
        <dbReference type="ChEBI" id="CHEBI:16704"/>
        <dbReference type="ChEBI" id="CHEBI:30616"/>
        <dbReference type="ChEBI" id="CHEBI:57865"/>
        <dbReference type="ChEBI" id="CHEBI:456216"/>
        <dbReference type="EC" id="2.7.1.48"/>
    </reaction>
</comment>
<comment type="catalytic activity">
    <reaction evidence="1">
        <text>cytidine + ATP = CMP + ADP + H(+)</text>
        <dbReference type="Rhea" id="RHEA:24674"/>
        <dbReference type="ChEBI" id="CHEBI:15378"/>
        <dbReference type="ChEBI" id="CHEBI:17562"/>
        <dbReference type="ChEBI" id="CHEBI:30616"/>
        <dbReference type="ChEBI" id="CHEBI:60377"/>
        <dbReference type="ChEBI" id="CHEBI:456216"/>
        <dbReference type="EC" id="2.7.1.48"/>
    </reaction>
</comment>
<comment type="pathway">
    <text evidence="1">Pyrimidine metabolism; CTP biosynthesis via salvage pathway; CTP from cytidine: step 1/3.</text>
</comment>
<comment type="pathway">
    <text evidence="1">Pyrimidine metabolism; UMP biosynthesis via salvage pathway; UMP from uridine: step 1/1.</text>
</comment>
<comment type="subcellular location">
    <subcellularLocation>
        <location evidence="1">Cytoplasm</location>
    </subcellularLocation>
</comment>
<comment type="similarity">
    <text evidence="1">Belongs to the uridine kinase family.</text>
</comment>
<accession>C6DCI6</accession>
<sequence length="213" mass="24585">MTDQSHQCVIIGISGASASGKSLISSTLYRELRDQVGDQHIGVISEDSYYKDQSHLTMEERVKTNYDHPSSMDHSLLLKHLQMLKAGQAIEVPQYSYVEHTRKQETVHIELKKVIILEGILLLTDARLRDEMNFSIFVDTPLDICLLRRMRRDVNERGRSMDSVMEQYQKTVRPMFLQFIEPSKQYADIIVPRGGKNRIAIDILKAKISQFFE</sequence>
<organism>
    <name type="scientific">Pectobacterium carotovorum subsp. carotovorum (strain PC1)</name>
    <dbReference type="NCBI Taxonomy" id="561230"/>
    <lineage>
        <taxon>Bacteria</taxon>
        <taxon>Pseudomonadati</taxon>
        <taxon>Pseudomonadota</taxon>
        <taxon>Gammaproteobacteria</taxon>
        <taxon>Enterobacterales</taxon>
        <taxon>Pectobacteriaceae</taxon>
        <taxon>Pectobacterium</taxon>
    </lineage>
</organism>
<reference key="1">
    <citation type="submission" date="2009-07" db="EMBL/GenBank/DDBJ databases">
        <title>Complete sequence of Pectobacterium carotovorum subsp. carotovorum PC1.</title>
        <authorList>
            <consortium name="US DOE Joint Genome Institute"/>
            <person name="Lucas S."/>
            <person name="Copeland A."/>
            <person name="Lapidus A."/>
            <person name="Glavina del Rio T."/>
            <person name="Tice H."/>
            <person name="Bruce D."/>
            <person name="Goodwin L."/>
            <person name="Pitluck S."/>
            <person name="Munk A.C."/>
            <person name="Brettin T."/>
            <person name="Detter J.C."/>
            <person name="Han C."/>
            <person name="Tapia R."/>
            <person name="Larimer F."/>
            <person name="Land M."/>
            <person name="Hauser L."/>
            <person name="Kyrpides N."/>
            <person name="Mikhailova N."/>
            <person name="Balakrishnan V."/>
            <person name="Glasner J."/>
            <person name="Perna N.T."/>
        </authorList>
    </citation>
    <scope>NUCLEOTIDE SEQUENCE [LARGE SCALE GENOMIC DNA]</scope>
    <source>
        <strain>PC1</strain>
    </source>
</reference>
<proteinExistence type="inferred from homology"/>
<protein>
    <recommendedName>
        <fullName evidence="1">Uridine kinase</fullName>
        <ecNumber evidence="1">2.7.1.48</ecNumber>
    </recommendedName>
    <alternativeName>
        <fullName evidence="1">Cytidine monophosphokinase</fullName>
    </alternativeName>
    <alternativeName>
        <fullName evidence="1">Uridine monophosphokinase</fullName>
    </alternativeName>
</protein>
<dbReference type="EC" id="2.7.1.48" evidence="1"/>
<dbReference type="EMBL" id="CP001657">
    <property type="protein sequence ID" value="ACT12336.1"/>
    <property type="molecule type" value="Genomic_DNA"/>
</dbReference>
<dbReference type="RefSeq" id="WP_015839564.1">
    <property type="nucleotide sequence ID" value="NC_012917.1"/>
</dbReference>
<dbReference type="SMR" id="C6DCI6"/>
<dbReference type="STRING" id="561230.PC1_1289"/>
<dbReference type="GeneID" id="67794940"/>
<dbReference type="KEGG" id="pct:PC1_1289"/>
<dbReference type="eggNOG" id="COG0572">
    <property type="taxonomic scope" value="Bacteria"/>
</dbReference>
<dbReference type="HOGENOM" id="CLU_021278_1_2_6"/>
<dbReference type="OrthoDB" id="9777642at2"/>
<dbReference type="UniPathway" id="UPA00574">
    <property type="reaction ID" value="UER00637"/>
</dbReference>
<dbReference type="UniPathway" id="UPA00579">
    <property type="reaction ID" value="UER00640"/>
</dbReference>
<dbReference type="Proteomes" id="UP000002736">
    <property type="component" value="Chromosome"/>
</dbReference>
<dbReference type="GO" id="GO:0005737">
    <property type="term" value="C:cytoplasm"/>
    <property type="evidence" value="ECO:0007669"/>
    <property type="project" value="UniProtKB-SubCell"/>
</dbReference>
<dbReference type="GO" id="GO:0005524">
    <property type="term" value="F:ATP binding"/>
    <property type="evidence" value="ECO:0007669"/>
    <property type="project" value="UniProtKB-UniRule"/>
</dbReference>
<dbReference type="GO" id="GO:0043771">
    <property type="term" value="F:cytidine kinase activity"/>
    <property type="evidence" value="ECO:0007669"/>
    <property type="project" value="RHEA"/>
</dbReference>
<dbReference type="GO" id="GO:0004849">
    <property type="term" value="F:uridine kinase activity"/>
    <property type="evidence" value="ECO:0007669"/>
    <property type="project" value="UniProtKB-UniRule"/>
</dbReference>
<dbReference type="GO" id="GO:0044211">
    <property type="term" value="P:CTP salvage"/>
    <property type="evidence" value="ECO:0007669"/>
    <property type="project" value="UniProtKB-UniRule"/>
</dbReference>
<dbReference type="GO" id="GO:0044206">
    <property type="term" value="P:UMP salvage"/>
    <property type="evidence" value="ECO:0007669"/>
    <property type="project" value="UniProtKB-UniRule"/>
</dbReference>
<dbReference type="CDD" id="cd02023">
    <property type="entry name" value="UMPK"/>
    <property type="match status" value="1"/>
</dbReference>
<dbReference type="FunFam" id="3.40.50.300:FF:000252">
    <property type="entry name" value="Uridine kinase"/>
    <property type="match status" value="1"/>
</dbReference>
<dbReference type="Gene3D" id="3.40.50.300">
    <property type="entry name" value="P-loop containing nucleotide triphosphate hydrolases"/>
    <property type="match status" value="1"/>
</dbReference>
<dbReference type="HAMAP" id="MF_00551">
    <property type="entry name" value="Uridine_kinase"/>
    <property type="match status" value="1"/>
</dbReference>
<dbReference type="InterPro" id="IPR027417">
    <property type="entry name" value="P-loop_NTPase"/>
</dbReference>
<dbReference type="InterPro" id="IPR006083">
    <property type="entry name" value="PRK/URK"/>
</dbReference>
<dbReference type="InterPro" id="IPR026008">
    <property type="entry name" value="Uridine_kinase"/>
</dbReference>
<dbReference type="InterPro" id="IPR000764">
    <property type="entry name" value="Uridine_kinase-like"/>
</dbReference>
<dbReference type="NCBIfam" id="NF004018">
    <property type="entry name" value="PRK05480.1"/>
    <property type="match status" value="1"/>
</dbReference>
<dbReference type="NCBIfam" id="TIGR00235">
    <property type="entry name" value="udk"/>
    <property type="match status" value="1"/>
</dbReference>
<dbReference type="PANTHER" id="PTHR10285">
    <property type="entry name" value="URIDINE KINASE"/>
    <property type="match status" value="1"/>
</dbReference>
<dbReference type="Pfam" id="PF00485">
    <property type="entry name" value="PRK"/>
    <property type="match status" value="1"/>
</dbReference>
<dbReference type="PRINTS" id="PR00988">
    <property type="entry name" value="URIDINKINASE"/>
</dbReference>
<dbReference type="SUPFAM" id="SSF52540">
    <property type="entry name" value="P-loop containing nucleoside triphosphate hydrolases"/>
    <property type="match status" value="1"/>
</dbReference>
<gene>
    <name evidence="1" type="primary">udk</name>
    <name type="ordered locus">PC1_1289</name>
</gene>
<name>URK_PECCP</name>
<evidence type="ECO:0000255" key="1">
    <source>
        <dbReference type="HAMAP-Rule" id="MF_00551"/>
    </source>
</evidence>
<feature type="chain" id="PRO_1000212001" description="Uridine kinase">
    <location>
        <begin position="1"/>
        <end position="213"/>
    </location>
</feature>
<feature type="binding site" evidence="1">
    <location>
        <begin position="15"/>
        <end position="22"/>
    </location>
    <ligand>
        <name>ATP</name>
        <dbReference type="ChEBI" id="CHEBI:30616"/>
    </ligand>
</feature>
<keyword id="KW-0067">ATP-binding</keyword>
<keyword id="KW-0963">Cytoplasm</keyword>
<keyword id="KW-0418">Kinase</keyword>
<keyword id="KW-0547">Nucleotide-binding</keyword>
<keyword id="KW-0808">Transferase</keyword>